<dbReference type="EC" id="1.4.3.16" evidence="1"/>
<dbReference type="EMBL" id="BA000004">
    <property type="protein sequence ID" value="BAB04937.1"/>
    <property type="molecule type" value="Genomic_DNA"/>
</dbReference>
<dbReference type="PIR" id="B83802">
    <property type="entry name" value="B83802"/>
</dbReference>
<dbReference type="RefSeq" id="WP_010897386.1">
    <property type="nucleotide sequence ID" value="NC_002570.2"/>
</dbReference>
<dbReference type="SMR" id="Q9KDJ5"/>
<dbReference type="STRING" id="272558.gene:10727112"/>
<dbReference type="KEGG" id="bha:BH1218"/>
<dbReference type="eggNOG" id="COG0029">
    <property type="taxonomic scope" value="Bacteria"/>
</dbReference>
<dbReference type="HOGENOM" id="CLU_014312_3_2_9"/>
<dbReference type="OrthoDB" id="9806724at2"/>
<dbReference type="UniPathway" id="UPA00253">
    <property type="reaction ID" value="UER00326"/>
</dbReference>
<dbReference type="Proteomes" id="UP000001258">
    <property type="component" value="Chromosome"/>
</dbReference>
<dbReference type="GO" id="GO:0005737">
    <property type="term" value="C:cytoplasm"/>
    <property type="evidence" value="ECO:0007669"/>
    <property type="project" value="UniProtKB-SubCell"/>
</dbReference>
<dbReference type="GO" id="GO:0008734">
    <property type="term" value="F:L-aspartate oxidase activity"/>
    <property type="evidence" value="ECO:0007669"/>
    <property type="project" value="UniProtKB-EC"/>
</dbReference>
<dbReference type="GO" id="GO:0000166">
    <property type="term" value="F:nucleotide binding"/>
    <property type="evidence" value="ECO:0007669"/>
    <property type="project" value="UniProtKB-KW"/>
</dbReference>
<dbReference type="GO" id="GO:0033765">
    <property type="term" value="F:steroid dehydrogenase activity, acting on the CH-CH group of donors"/>
    <property type="evidence" value="ECO:0007669"/>
    <property type="project" value="UniProtKB-ARBA"/>
</dbReference>
<dbReference type="GO" id="GO:0034628">
    <property type="term" value="P:'de novo' NAD biosynthetic process from L-aspartate"/>
    <property type="evidence" value="ECO:0007669"/>
    <property type="project" value="TreeGrafter"/>
</dbReference>
<dbReference type="Gene3D" id="3.50.50.60">
    <property type="entry name" value="FAD/NAD(P)-binding domain"/>
    <property type="match status" value="1"/>
</dbReference>
<dbReference type="Gene3D" id="1.20.58.100">
    <property type="entry name" value="Fumarate reductase/succinate dehydrogenase flavoprotein-like, C-terminal domain"/>
    <property type="match status" value="1"/>
</dbReference>
<dbReference type="Gene3D" id="3.90.700.10">
    <property type="entry name" value="Succinate dehydrogenase/fumarate reductase flavoprotein, catalytic domain"/>
    <property type="match status" value="1"/>
</dbReference>
<dbReference type="InterPro" id="IPR003953">
    <property type="entry name" value="FAD-dep_OxRdtase_2_FAD-bd"/>
</dbReference>
<dbReference type="InterPro" id="IPR036188">
    <property type="entry name" value="FAD/NAD-bd_sf"/>
</dbReference>
<dbReference type="InterPro" id="IPR037099">
    <property type="entry name" value="Fum_R/Succ_DH_flav-like_C_sf"/>
</dbReference>
<dbReference type="InterPro" id="IPR015939">
    <property type="entry name" value="Fum_Rdtase/Succ_DH_flav-like_C"/>
</dbReference>
<dbReference type="InterPro" id="IPR005288">
    <property type="entry name" value="NadB"/>
</dbReference>
<dbReference type="InterPro" id="IPR027477">
    <property type="entry name" value="Succ_DH/fumarate_Rdtase_cat_sf"/>
</dbReference>
<dbReference type="PANTHER" id="PTHR42716">
    <property type="entry name" value="L-ASPARTATE OXIDASE"/>
    <property type="match status" value="1"/>
</dbReference>
<dbReference type="PANTHER" id="PTHR42716:SF2">
    <property type="entry name" value="L-ASPARTATE OXIDASE, CHLOROPLASTIC"/>
    <property type="match status" value="1"/>
</dbReference>
<dbReference type="Pfam" id="PF00890">
    <property type="entry name" value="FAD_binding_2"/>
    <property type="match status" value="1"/>
</dbReference>
<dbReference type="Pfam" id="PF02910">
    <property type="entry name" value="Succ_DH_flav_C"/>
    <property type="match status" value="1"/>
</dbReference>
<dbReference type="PRINTS" id="PR00368">
    <property type="entry name" value="FADPNR"/>
</dbReference>
<dbReference type="SUPFAM" id="SSF51905">
    <property type="entry name" value="FAD/NAD(P)-binding domain"/>
    <property type="match status" value="1"/>
</dbReference>
<dbReference type="SUPFAM" id="SSF46977">
    <property type="entry name" value="Succinate dehydrogenase/fumarate reductase flavoprotein C-terminal domain"/>
    <property type="match status" value="1"/>
</dbReference>
<dbReference type="SUPFAM" id="SSF56425">
    <property type="entry name" value="Succinate dehydrogenase/fumarate reductase flavoprotein, catalytic domain"/>
    <property type="match status" value="1"/>
</dbReference>
<accession>Q9KDJ5</accession>
<protein>
    <recommendedName>
        <fullName evidence="1">L-aspartate oxidase</fullName>
        <shortName evidence="1">LASPO</shortName>
        <ecNumber evidence="1">1.4.3.16</ecNumber>
    </recommendedName>
    <alternativeName>
        <fullName>Quinolinate synthase B</fullName>
    </alternativeName>
</protein>
<proteinExistence type="inferred from homology"/>
<comment type="function">
    <text evidence="1">Catalyzes the oxidation of L-aspartate to iminoaspartate, the first step in the de novo biosynthesis of NAD(+).</text>
</comment>
<comment type="catalytic activity">
    <reaction evidence="1">
        <text>L-aspartate + O2 = iminosuccinate + H2O2</text>
        <dbReference type="Rhea" id="RHEA:25876"/>
        <dbReference type="ChEBI" id="CHEBI:15379"/>
        <dbReference type="ChEBI" id="CHEBI:16240"/>
        <dbReference type="ChEBI" id="CHEBI:29991"/>
        <dbReference type="ChEBI" id="CHEBI:77875"/>
        <dbReference type="EC" id="1.4.3.16"/>
    </reaction>
    <physiologicalReaction direction="left-to-right" evidence="1">
        <dbReference type="Rhea" id="RHEA:25877"/>
    </physiologicalReaction>
</comment>
<comment type="cofactor">
    <cofactor evidence="1">
        <name>FAD</name>
        <dbReference type="ChEBI" id="CHEBI:57692"/>
    </cofactor>
    <text evidence="1">Binds 1 FAD per subunit.</text>
</comment>
<comment type="pathway">
    <text evidence="1">Cofactor biosynthesis; NAD(+) biosynthesis; iminoaspartate from L-aspartate (oxidase route): step 1/1.</text>
</comment>
<comment type="subcellular location">
    <subcellularLocation>
        <location evidence="1">Cytoplasm</location>
    </subcellularLocation>
</comment>
<comment type="similarity">
    <text evidence="2">Belongs to the FAD-dependent oxidoreductase 2 family. NadB subfamily.</text>
</comment>
<gene>
    <name type="primary">nadB</name>
    <name type="ordered locus">BH1218</name>
</gene>
<organism>
    <name type="scientific">Halalkalibacterium halodurans (strain ATCC BAA-125 / DSM 18197 / FERM 7344 / JCM 9153 / C-125)</name>
    <name type="common">Bacillus halodurans</name>
    <dbReference type="NCBI Taxonomy" id="272558"/>
    <lineage>
        <taxon>Bacteria</taxon>
        <taxon>Bacillati</taxon>
        <taxon>Bacillota</taxon>
        <taxon>Bacilli</taxon>
        <taxon>Bacillales</taxon>
        <taxon>Bacillaceae</taxon>
        <taxon>Halalkalibacterium (ex Joshi et al. 2022)</taxon>
    </lineage>
</organism>
<sequence length="509" mass="56327">MRCDGEVIIVGSGIAAMMSAYLLRKSFHVIMITKSDVFASNSFLAQGGIAAPIAEGDDWQAHTADTWKAGAAHGDETSIEMMTKHAVNMIELLDDLGVSFDREESGGYSLGLEGAHGTRRIVHVNGAETGKAVMRALWKAIKNEITLLDRTCVYRFIKNKDEIIGVETDQGSLFAPVTIVATGGCGQMYSVTSNGKEATGDGIALAYRSGAAISDVEFIQFHPTVYTGNEKEKGLLISEAVRGEGGQLITSAGERLQSLKSRDVVSREIFRQEREGHTVHLDLTGISDFERKFPALYKGFNKSDRRTLKPRVTPGAHFLNGGISVDAWGQTSLSRLYAVGEVACTGVHGANRLASNSLLEGLVFAHQAATHIQQTFQPLTAGLFVERDKAEPRSFKLPTREDLQKKMMRYVGIERHARSLWYMNNWFQPFLDTAHYNGPWPERDMFEQANMTLLASLITRSAAIRTESRGGHFRADYPNGLDKFQQLIIEWQNGAHMKRQRPTIKELSR</sequence>
<keyword id="KW-0963">Cytoplasm</keyword>
<keyword id="KW-0274">FAD</keyword>
<keyword id="KW-0285">Flavoprotein</keyword>
<keyword id="KW-0547">Nucleotide-binding</keyword>
<keyword id="KW-0560">Oxidoreductase</keyword>
<keyword id="KW-0662">Pyridine nucleotide biosynthesis</keyword>
<keyword id="KW-1185">Reference proteome</keyword>
<feature type="chain" id="PRO_0000184379" description="L-aspartate oxidase">
    <location>
        <begin position="1"/>
        <end position="509"/>
    </location>
</feature>
<feature type="active site" description="Proton donor/acceptor" evidence="1">
    <location>
        <position position="262"/>
    </location>
</feature>
<feature type="binding site" evidence="1">
    <location>
        <begin position="12"/>
        <end position="15"/>
    </location>
    <ligand>
        <name>FAD</name>
        <dbReference type="ChEBI" id="CHEBI:57692"/>
    </ligand>
</feature>
<feature type="binding site" evidence="1">
    <location>
        <position position="34"/>
    </location>
    <ligand>
        <name>FAD</name>
        <dbReference type="ChEBI" id="CHEBI:57692"/>
    </ligand>
</feature>
<feature type="binding site" evidence="1">
    <location>
        <begin position="41"/>
        <end position="48"/>
    </location>
    <ligand>
        <name>FAD</name>
        <dbReference type="ChEBI" id="CHEBI:57692"/>
    </ligand>
</feature>
<feature type="binding site" evidence="1">
    <location>
        <position position="201"/>
    </location>
    <ligand>
        <name>FAD</name>
        <dbReference type="ChEBI" id="CHEBI:57692"/>
    </ligand>
</feature>
<feature type="binding site" evidence="1">
    <location>
        <position position="341"/>
    </location>
    <ligand>
        <name>FAD</name>
        <dbReference type="ChEBI" id="CHEBI:57692"/>
    </ligand>
</feature>
<feature type="binding site" evidence="1">
    <location>
        <begin position="357"/>
        <end position="358"/>
    </location>
    <ligand>
        <name>FAD</name>
        <dbReference type="ChEBI" id="CHEBI:57692"/>
    </ligand>
</feature>
<feature type="site" description="Important in orienting the L-aspartate substrate" evidence="1">
    <location>
        <position position="113"/>
    </location>
</feature>
<reference key="1">
    <citation type="journal article" date="2000" name="Nucleic Acids Res.">
        <title>Complete genome sequence of the alkaliphilic bacterium Bacillus halodurans and genomic sequence comparison with Bacillus subtilis.</title>
        <authorList>
            <person name="Takami H."/>
            <person name="Nakasone K."/>
            <person name="Takaki Y."/>
            <person name="Maeno G."/>
            <person name="Sasaki R."/>
            <person name="Masui N."/>
            <person name="Fuji F."/>
            <person name="Hirama C."/>
            <person name="Nakamura Y."/>
            <person name="Ogasawara N."/>
            <person name="Kuhara S."/>
            <person name="Horikoshi K."/>
        </authorList>
    </citation>
    <scope>NUCLEOTIDE SEQUENCE [LARGE SCALE GENOMIC DNA]</scope>
    <source>
        <strain>ATCC BAA-125 / DSM 18197 / FERM 7344 / JCM 9153 / C-125</strain>
    </source>
</reference>
<evidence type="ECO:0000250" key="1">
    <source>
        <dbReference type="UniProtKB" id="P10902"/>
    </source>
</evidence>
<evidence type="ECO:0000305" key="2"/>
<name>NADB_HALH5</name>